<proteinExistence type="inferred from homology"/>
<gene>
    <name type="ordered locus">NFA_55110</name>
</gene>
<protein>
    <recommendedName>
        <fullName evidence="1">UPF0301 protein NFA_55110</fullName>
    </recommendedName>
</protein>
<comment type="similarity">
    <text evidence="1">Belongs to the UPF0301 (AlgH) family.</text>
</comment>
<reference key="1">
    <citation type="journal article" date="2004" name="Proc. Natl. Acad. Sci. U.S.A.">
        <title>The complete genomic sequence of Nocardia farcinica IFM 10152.</title>
        <authorList>
            <person name="Ishikawa J."/>
            <person name="Yamashita A."/>
            <person name="Mikami Y."/>
            <person name="Hoshino Y."/>
            <person name="Kurita H."/>
            <person name="Hotta K."/>
            <person name="Shiba T."/>
            <person name="Hattori M."/>
        </authorList>
    </citation>
    <scope>NUCLEOTIDE SEQUENCE [LARGE SCALE GENOMIC DNA]</scope>
    <source>
        <strain>IFM 10152</strain>
    </source>
</reference>
<sequence length="214" mass="23213">MARADDPDERKTQGGHGDRRRREFRGGEQVVRAGTLLLAATDLTEPTFRRSVVYIMEHNDSGSLGVVINRPSETSLADVLPRWSALAADPGTLYFGGPVKRDAALCLGTLKVGASTAGVPGLRRIDGRVVLVDLAADPERIAPLVEGIRVFAGYAGWTFGQLEGELDNEDWIVLSALPTDPISAARPDLWADVLRRQPLPMSLLATHPIEVERN</sequence>
<organism>
    <name type="scientific">Nocardia farcinica (strain IFM 10152)</name>
    <dbReference type="NCBI Taxonomy" id="247156"/>
    <lineage>
        <taxon>Bacteria</taxon>
        <taxon>Bacillati</taxon>
        <taxon>Actinomycetota</taxon>
        <taxon>Actinomycetes</taxon>
        <taxon>Mycobacteriales</taxon>
        <taxon>Nocardiaceae</taxon>
        <taxon>Nocardia</taxon>
    </lineage>
</organism>
<dbReference type="EMBL" id="AP006618">
    <property type="protein sequence ID" value="BAD60363.1"/>
    <property type="molecule type" value="Genomic_DNA"/>
</dbReference>
<dbReference type="RefSeq" id="WP_011212045.1">
    <property type="nucleotide sequence ID" value="NC_006361.1"/>
</dbReference>
<dbReference type="SMR" id="Q5YN78"/>
<dbReference type="STRING" id="247156.NFA_55110"/>
<dbReference type="GeneID" id="61136080"/>
<dbReference type="KEGG" id="nfa:NFA_55110"/>
<dbReference type="eggNOG" id="COG1678">
    <property type="taxonomic scope" value="Bacteria"/>
</dbReference>
<dbReference type="HOGENOM" id="CLU_057596_2_0_11"/>
<dbReference type="OrthoDB" id="9807486at2"/>
<dbReference type="Proteomes" id="UP000006820">
    <property type="component" value="Chromosome"/>
</dbReference>
<dbReference type="GO" id="GO:0005829">
    <property type="term" value="C:cytosol"/>
    <property type="evidence" value="ECO:0007669"/>
    <property type="project" value="TreeGrafter"/>
</dbReference>
<dbReference type="Gene3D" id="3.40.1740.10">
    <property type="entry name" value="VC0467-like"/>
    <property type="match status" value="1"/>
</dbReference>
<dbReference type="HAMAP" id="MF_00758">
    <property type="entry name" value="UPF0301"/>
    <property type="match status" value="1"/>
</dbReference>
<dbReference type="InterPro" id="IPR003774">
    <property type="entry name" value="AlgH-like"/>
</dbReference>
<dbReference type="NCBIfam" id="NF001269">
    <property type="entry name" value="PRK00228.2-1"/>
    <property type="match status" value="1"/>
</dbReference>
<dbReference type="PANTHER" id="PTHR30327">
    <property type="entry name" value="UNCHARACTERIZED PROTEIN YQGE"/>
    <property type="match status" value="1"/>
</dbReference>
<dbReference type="PANTHER" id="PTHR30327:SF1">
    <property type="entry name" value="UPF0301 PROTEIN YQGE"/>
    <property type="match status" value="1"/>
</dbReference>
<dbReference type="Pfam" id="PF02622">
    <property type="entry name" value="DUF179"/>
    <property type="match status" value="1"/>
</dbReference>
<dbReference type="SUPFAM" id="SSF143456">
    <property type="entry name" value="VC0467-like"/>
    <property type="match status" value="1"/>
</dbReference>
<accession>Q5YN78</accession>
<evidence type="ECO:0000255" key="1">
    <source>
        <dbReference type="HAMAP-Rule" id="MF_00758"/>
    </source>
</evidence>
<evidence type="ECO:0000256" key="2">
    <source>
        <dbReference type="SAM" id="MobiDB-lite"/>
    </source>
</evidence>
<feature type="chain" id="PRO_0000258849" description="UPF0301 protein NFA_55110">
    <location>
        <begin position="1"/>
        <end position="214"/>
    </location>
</feature>
<feature type="region of interest" description="Disordered" evidence="2">
    <location>
        <begin position="1"/>
        <end position="24"/>
    </location>
</feature>
<keyword id="KW-1185">Reference proteome</keyword>
<name>Y5511_NOCFA</name>